<evidence type="ECO:0000255" key="1">
    <source>
        <dbReference type="HAMAP-Rule" id="MF_00149"/>
    </source>
</evidence>
<evidence type="ECO:0000256" key="2">
    <source>
        <dbReference type="SAM" id="MobiDB-lite"/>
    </source>
</evidence>
<comment type="function">
    <text evidence="1">This protein is involved in the repair of mismatches in DNA. It is required for dam-dependent methyl-directed DNA mismatch repair. May act as a 'molecular matchmaker', a protein that promotes the formation of a stable complex between two or more DNA-binding proteins in an ATP-dependent manner without itself being part of a final effector complex.</text>
</comment>
<comment type="similarity">
    <text evidence="1">Belongs to the DNA mismatch repair MutL/HexB family.</text>
</comment>
<accession>Q02F72</accession>
<name>MUTL_PSEAB</name>
<dbReference type="EMBL" id="CP000438">
    <property type="protein sequence ID" value="ABJ14331.1"/>
    <property type="molecule type" value="Genomic_DNA"/>
</dbReference>
<dbReference type="RefSeq" id="WP_003095660.1">
    <property type="nucleotide sequence ID" value="NZ_CP034244.1"/>
</dbReference>
<dbReference type="SMR" id="Q02F72"/>
<dbReference type="KEGG" id="pau:PA14_65350"/>
<dbReference type="PseudoCAP" id="PA14_65350"/>
<dbReference type="HOGENOM" id="CLU_004131_4_2_6"/>
<dbReference type="BioCyc" id="PAER208963:G1G74-5521-MONOMER"/>
<dbReference type="Proteomes" id="UP000000653">
    <property type="component" value="Chromosome"/>
</dbReference>
<dbReference type="GO" id="GO:0032300">
    <property type="term" value="C:mismatch repair complex"/>
    <property type="evidence" value="ECO:0007669"/>
    <property type="project" value="InterPro"/>
</dbReference>
<dbReference type="GO" id="GO:0005524">
    <property type="term" value="F:ATP binding"/>
    <property type="evidence" value="ECO:0007669"/>
    <property type="project" value="InterPro"/>
</dbReference>
<dbReference type="GO" id="GO:0016887">
    <property type="term" value="F:ATP hydrolysis activity"/>
    <property type="evidence" value="ECO:0007669"/>
    <property type="project" value="InterPro"/>
</dbReference>
<dbReference type="GO" id="GO:0140664">
    <property type="term" value="F:ATP-dependent DNA damage sensor activity"/>
    <property type="evidence" value="ECO:0007669"/>
    <property type="project" value="InterPro"/>
</dbReference>
<dbReference type="GO" id="GO:0030983">
    <property type="term" value="F:mismatched DNA binding"/>
    <property type="evidence" value="ECO:0007669"/>
    <property type="project" value="InterPro"/>
</dbReference>
<dbReference type="GO" id="GO:0006298">
    <property type="term" value="P:mismatch repair"/>
    <property type="evidence" value="ECO:0007669"/>
    <property type="project" value="UniProtKB-UniRule"/>
</dbReference>
<dbReference type="CDD" id="cd16926">
    <property type="entry name" value="HATPase_MutL-MLH-PMS-like"/>
    <property type="match status" value="1"/>
</dbReference>
<dbReference type="CDD" id="cd03482">
    <property type="entry name" value="MutL_Trans_MutL"/>
    <property type="match status" value="1"/>
</dbReference>
<dbReference type="FunFam" id="3.30.230.10:FF:000013">
    <property type="entry name" value="DNA mismatch repair endonuclease MutL"/>
    <property type="match status" value="1"/>
</dbReference>
<dbReference type="FunFam" id="3.30.565.10:FF:000003">
    <property type="entry name" value="DNA mismatch repair endonuclease MutL"/>
    <property type="match status" value="1"/>
</dbReference>
<dbReference type="FunFam" id="3.30.1370.100:FF:000005">
    <property type="entry name" value="DNA mismatch repair protein MutL"/>
    <property type="match status" value="1"/>
</dbReference>
<dbReference type="Gene3D" id="3.30.230.10">
    <property type="match status" value="1"/>
</dbReference>
<dbReference type="Gene3D" id="3.30.565.10">
    <property type="entry name" value="Histidine kinase-like ATPase, C-terminal domain"/>
    <property type="match status" value="1"/>
</dbReference>
<dbReference type="Gene3D" id="3.30.1540.20">
    <property type="entry name" value="MutL, C-terminal domain, dimerisation subdomain"/>
    <property type="match status" value="1"/>
</dbReference>
<dbReference type="Gene3D" id="3.30.1370.100">
    <property type="entry name" value="MutL, C-terminal domain, regulatory subdomain"/>
    <property type="match status" value="1"/>
</dbReference>
<dbReference type="HAMAP" id="MF_00149">
    <property type="entry name" value="DNA_mis_repair"/>
    <property type="match status" value="1"/>
</dbReference>
<dbReference type="InterPro" id="IPR014762">
    <property type="entry name" value="DNA_mismatch_repair_CS"/>
</dbReference>
<dbReference type="InterPro" id="IPR020667">
    <property type="entry name" value="DNA_mismatch_repair_MutL"/>
</dbReference>
<dbReference type="InterPro" id="IPR013507">
    <property type="entry name" value="DNA_mismatch_S5_2-like"/>
</dbReference>
<dbReference type="InterPro" id="IPR036890">
    <property type="entry name" value="HATPase_C_sf"/>
</dbReference>
<dbReference type="InterPro" id="IPR002099">
    <property type="entry name" value="MutL/Mlh/PMS"/>
</dbReference>
<dbReference type="InterPro" id="IPR038973">
    <property type="entry name" value="MutL/Mlh/Pms-like"/>
</dbReference>
<dbReference type="InterPro" id="IPR014790">
    <property type="entry name" value="MutL_C"/>
</dbReference>
<dbReference type="InterPro" id="IPR042120">
    <property type="entry name" value="MutL_C_dimsub"/>
</dbReference>
<dbReference type="InterPro" id="IPR042121">
    <property type="entry name" value="MutL_C_regsub"/>
</dbReference>
<dbReference type="InterPro" id="IPR037198">
    <property type="entry name" value="MutL_C_sf"/>
</dbReference>
<dbReference type="InterPro" id="IPR020568">
    <property type="entry name" value="Ribosomal_Su5_D2-typ_SF"/>
</dbReference>
<dbReference type="InterPro" id="IPR014721">
    <property type="entry name" value="Ribsml_uS5_D2-typ_fold_subgr"/>
</dbReference>
<dbReference type="NCBIfam" id="TIGR00585">
    <property type="entry name" value="mutl"/>
    <property type="match status" value="1"/>
</dbReference>
<dbReference type="NCBIfam" id="NF000949">
    <property type="entry name" value="PRK00095.1-2"/>
    <property type="match status" value="1"/>
</dbReference>
<dbReference type="PANTHER" id="PTHR10073">
    <property type="entry name" value="DNA MISMATCH REPAIR PROTEIN MLH, PMS, MUTL"/>
    <property type="match status" value="1"/>
</dbReference>
<dbReference type="PANTHER" id="PTHR10073:SF12">
    <property type="entry name" value="DNA MISMATCH REPAIR PROTEIN MLH1"/>
    <property type="match status" value="1"/>
</dbReference>
<dbReference type="Pfam" id="PF01119">
    <property type="entry name" value="DNA_mis_repair"/>
    <property type="match status" value="1"/>
</dbReference>
<dbReference type="Pfam" id="PF13589">
    <property type="entry name" value="HATPase_c_3"/>
    <property type="match status" value="1"/>
</dbReference>
<dbReference type="Pfam" id="PF08676">
    <property type="entry name" value="MutL_C"/>
    <property type="match status" value="1"/>
</dbReference>
<dbReference type="SMART" id="SM01340">
    <property type="entry name" value="DNA_mis_repair"/>
    <property type="match status" value="1"/>
</dbReference>
<dbReference type="SMART" id="SM00853">
    <property type="entry name" value="MutL_C"/>
    <property type="match status" value="1"/>
</dbReference>
<dbReference type="SUPFAM" id="SSF55874">
    <property type="entry name" value="ATPase domain of HSP90 chaperone/DNA topoisomerase II/histidine kinase"/>
    <property type="match status" value="1"/>
</dbReference>
<dbReference type="SUPFAM" id="SSF118116">
    <property type="entry name" value="DNA mismatch repair protein MutL"/>
    <property type="match status" value="1"/>
</dbReference>
<dbReference type="SUPFAM" id="SSF54211">
    <property type="entry name" value="Ribosomal protein S5 domain 2-like"/>
    <property type="match status" value="1"/>
</dbReference>
<dbReference type="PROSITE" id="PS00058">
    <property type="entry name" value="DNA_MISMATCH_REPAIR_1"/>
    <property type="match status" value="1"/>
</dbReference>
<sequence>MSETPRIQLLSPRLANQIAAGEVVERPASVAKELLENSLDAGSRRIDVEVEQGGIKLLRVRDDGRGIPADDLPLALARHATSKIRELEDLERVMSLGFRGEALASISSVARLTMTSRTADAGEAWQVETEGRDMQPRVQPAAHPVGTSVEVRDLFFNTPARRKFLRAEKTEFDHLQEVIKRLALARFDVAFHLRHNGKTIFALHEARDELARARRVGAVCGQAFLEQALPIEVERNGLHLWGWVGLPTFSRSQPDLQYFYVNGRMVRDKLVAHAVRQAYRDVLYNGRHPTFVLFFEVDPAVVDVNVHPTKHEVRFRDSRMVHDFLYGTLHRALGEVRPDDQLAPPGATSLTEPRPTGAAAGEFGPQGEMRLAESVLESPAARVGWSGGSSASGGSSGYSAYTRPEAPPSLAEAGGAYKAYFAPLPAGEAPAALPESAQDIPPLGYALAQLKGIYILAENAHGLVLVDMHAAHERITYERLKVAMASEGLRGQPLLVPESIAVSEREADCAEEHSSWFQRLGFELQRLGPESLAIRQIPALLKQAEATQLVRDVIADLLEYGTSDRIQAHLNELLGTMACHGAVRANRRLTLPEMNALLRDMEITERSGQCNHGRPTWTQLGLDELDKLFLRGR</sequence>
<reference key="1">
    <citation type="journal article" date="2006" name="Genome Biol.">
        <title>Genomic analysis reveals that Pseudomonas aeruginosa virulence is combinatorial.</title>
        <authorList>
            <person name="Lee D.G."/>
            <person name="Urbach J.M."/>
            <person name="Wu G."/>
            <person name="Liberati N.T."/>
            <person name="Feinbaum R.L."/>
            <person name="Miyata S."/>
            <person name="Diggins L.T."/>
            <person name="He J."/>
            <person name="Saucier M."/>
            <person name="Deziel E."/>
            <person name="Friedman L."/>
            <person name="Li L."/>
            <person name="Grills G."/>
            <person name="Montgomery K."/>
            <person name="Kucherlapati R."/>
            <person name="Rahme L.G."/>
            <person name="Ausubel F.M."/>
        </authorList>
    </citation>
    <scope>NUCLEOTIDE SEQUENCE [LARGE SCALE GENOMIC DNA]</scope>
    <source>
        <strain>UCBPP-PA14</strain>
    </source>
</reference>
<feature type="chain" id="PRO_1000010058" description="DNA mismatch repair protein MutL">
    <location>
        <begin position="1"/>
        <end position="633"/>
    </location>
</feature>
<feature type="region of interest" description="Disordered" evidence="2">
    <location>
        <begin position="337"/>
        <end position="364"/>
    </location>
</feature>
<feature type="region of interest" description="Disordered" evidence="2">
    <location>
        <begin position="383"/>
        <end position="405"/>
    </location>
</feature>
<feature type="compositionally biased region" description="Gly residues" evidence="2">
    <location>
        <begin position="385"/>
        <end position="396"/>
    </location>
</feature>
<protein>
    <recommendedName>
        <fullName evidence="1">DNA mismatch repair protein MutL</fullName>
    </recommendedName>
</protein>
<organism>
    <name type="scientific">Pseudomonas aeruginosa (strain UCBPP-PA14)</name>
    <dbReference type="NCBI Taxonomy" id="208963"/>
    <lineage>
        <taxon>Bacteria</taxon>
        <taxon>Pseudomonadati</taxon>
        <taxon>Pseudomonadota</taxon>
        <taxon>Gammaproteobacteria</taxon>
        <taxon>Pseudomonadales</taxon>
        <taxon>Pseudomonadaceae</taxon>
        <taxon>Pseudomonas</taxon>
    </lineage>
</organism>
<proteinExistence type="inferred from homology"/>
<keyword id="KW-0227">DNA damage</keyword>
<keyword id="KW-0234">DNA repair</keyword>
<gene>
    <name evidence="1" type="primary">mutL</name>
    <name type="ordered locus">PA14_65350</name>
</gene>